<comment type="interaction">
    <interactant intactId="EBI-39962964">
        <id>Q8WWA1</id>
    </interactant>
    <interactant intactId="EBI-349854">
        <id>P13569</id>
        <label>CFTR</label>
    </interactant>
    <organismsDiffer>false</organismsDiffer>
    <experiments>9</experiments>
</comment>
<comment type="subcellular location">
    <subcellularLocation>
        <location evidence="4">Membrane</location>
        <topology evidence="4">Multi-pass membrane protein</topology>
    </subcellularLocation>
</comment>
<comment type="alternative products">
    <event type="alternative splicing"/>
    <isoform>
        <id>Q8WWA1-1</id>
        <name>1</name>
        <sequence type="displayed"/>
    </isoform>
    <isoform>
        <id>Q8WWA1-2</id>
        <name>2</name>
        <sequence type="described" ref="VSP_023643"/>
    </isoform>
    <isoform>
        <id>Q8WWA1-3</id>
        <name>3</name>
        <sequence type="described" ref="VSP_055682"/>
    </isoform>
</comment>
<evidence type="ECO:0000255" key="1"/>
<evidence type="ECO:0000256" key="2">
    <source>
        <dbReference type="SAM" id="MobiDB-lite"/>
    </source>
</evidence>
<evidence type="ECO:0000269" key="3">
    <source>
    </source>
</evidence>
<evidence type="ECO:0000269" key="4">
    <source ref="6"/>
</evidence>
<evidence type="ECO:0000303" key="5">
    <source>
    </source>
</evidence>
<evidence type="ECO:0000303" key="6">
    <source>
    </source>
</evidence>
<evidence type="ECO:0000305" key="7"/>
<evidence type="ECO:0007744" key="8">
    <source>
    </source>
</evidence>
<reference key="1">
    <citation type="journal article" date="2004" name="Nat. Genet.">
        <title>Complete sequencing and characterization of 21,243 full-length human cDNAs.</title>
        <authorList>
            <person name="Ota T."/>
            <person name="Suzuki Y."/>
            <person name="Nishikawa T."/>
            <person name="Otsuki T."/>
            <person name="Sugiyama T."/>
            <person name="Irie R."/>
            <person name="Wakamatsu A."/>
            <person name="Hayashi K."/>
            <person name="Sato H."/>
            <person name="Nagai K."/>
            <person name="Kimura K."/>
            <person name="Makita H."/>
            <person name="Sekine M."/>
            <person name="Obayashi M."/>
            <person name="Nishi T."/>
            <person name="Shibahara T."/>
            <person name="Tanaka T."/>
            <person name="Ishii S."/>
            <person name="Yamamoto J."/>
            <person name="Saito K."/>
            <person name="Kawai Y."/>
            <person name="Isono Y."/>
            <person name="Nakamura Y."/>
            <person name="Nagahari K."/>
            <person name="Murakami K."/>
            <person name="Yasuda T."/>
            <person name="Iwayanagi T."/>
            <person name="Wagatsuma M."/>
            <person name="Shiratori A."/>
            <person name="Sudo H."/>
            <person name="Hosoiri T."/>
            <person name="Kaku Y."/>
            <person name="Kodaira H."/>
            <person name="Kondo H."/>
            <person name="Sugawara M."/>
            <person name="Takahashi M."/>
            <person name="Kanda K."/>
            <person name="Yokoi T."/>
            <person name="Furuya T."/>
            <person name="Kikkawa E."/>
            <person name="Omura Y."/>
            <person name="Abe K."/>
            <person name="Kamihara K."/>
            <person name="Katsuta N."/>
            <person name="Sato K."/>
            <person name="Tanikawa M."/>
            <person name="Yamazaki M."/>
            <person name="Ninomiya K."/>
            <person name="Ishibashi T."/>
            <person name="Yamashita H."/>
            <person name="Murakawa K."/>
            <person name="Fujimori K."/>
            <person name="Tanai H."/>
            <person name="Kimata M."/>
            <person name="Watanabe M."/>
            <person name="Hiraoka S."/>
            <person name="Chiba Y."/>
            <person name="Ishida S."/>
            <person name="Ono Y."/>
            <person name="Takiguchi S."/>
            <person name="Watanabe S."/>
            <person name="Yosida M."/>
            <person name="Hotuta T."/>
            <person name="Kusano J."/>
            <person name="Kanehori K."/>
            <person name="Takahashi-Fujii A."/>
            <person name="Hara H."/>
            <person name="Tanase T.-O."/>
            <person name="Nomura Y."/>
            <person name="Togiya S."/>
            <person name="Komai F."/>
            <person name="Hara R."/>
            <person name="Takeuchi K."/>
            <person name="Arita M."/>
            <person name="Imose N."/>
            <person name="Musashino K."/>
            <person name="Yuuki H."/>
            <person name="Oshima A."/>
            <person name="Sasaki N."/>
            <person name="Aotsuka S."/>
            <person name="Yoshikawa Y."/>
            <person name="Matsunawa H."/>
            <person name="Ichihara T."/>
            <person name="Shiohata N."/>
            <person name="Sano S."/>
            <person name="Moriya S."/>
            <person name="Momiyama H."/>
            <person name="Satoh N."/>
            <person name="Takami S."/>
            <person name="Terashima Y."/>
            <person name="Suzuki O."/>
            <person name="Nakagawa S."/>
            <person name="Senoh A."/>
            <person name="Mizoguchi H."/>
            <person name="Goto Y."/>
            <person name="Shimizu F."/>
            <person name="Wakebe H."/>
            <person name="Hishigaki H."/>
            <person name="Watanabe T."/>
            <person name="Sugiyama A."/>
            <person name="Takemoto M."/>
            <person name="Kawakami B."/>
            <person name="Yamazaki M."/>
            <person name="Watanabe K."/>
            <person name="Kumagai A."/>
            <person name="Itakura S."/>
            <person name="Fukuzumi Y."/>
            <person name="Fujimori Y."/>
            <person name="Komiyama M."/>
            <person name="Tashiro H."/>
            <person name="Tanigami A."/>
            <person name="Fujiwara T."/>
            <person name="Ono T."/>
            <person name="Yamada K."/>
            <person name="Fujii Y."/>
            <person name="Ozaki K."/>
            <person name="Hirao M."/>
            <person name="Ohmori Y."/>
            <person name="Kawabata A."/>
            <person name="Hikiji T."/>
            <person name="Kobatake N."/>
            <person name="Inagaki H."/>
            <person name="Ikema Y."/>
            <person name="Okamoto S."/>
            <person name="Okitani R."/>
            <person name="Kawakami T."/>
            <person name="Noguchi S."/>
            <person name="Itoh T."/>
            <person name="Shigeta K."/>
            <person name="Senba T."/>
            <person name="Matsumura K."/>
            <person name="Nakajima Y."/>
            <person name="Mizuno T."/>
            <person name="Morinaga M."/>
            <person name="Sasaki M."/>
            <person name="Togashi T."/>
            <person name="Oyama M."/>
            <person name="Hata H."/>
            <person name="Watanabe M."/>
            <person name="Komatsu T."/>
            <person name="Mizushima-Sugano J."/>
            <person name="Satoh T."/>
            <person name="Shirai Y."/>
            <person name="Takahashi Y."/>
            <person name="Nakagawa K."/>
            <person name="Okumura K."/>
            <person name="Nagase T."/>
            <person name="Nomura N."/>
            <person name="Kikuchi H."/>
            <person name="Masuho Y."/>
            <person name="Yamashita R."/>
            <person name="Nakai K."/>
            <person name="Yada T."/>
            <person name="Nakamura Y."/>
            <person name="Ohara O."/>
            <person name="Isogai T."/>
            <person name="Sugano S."/>
        </authorList>
    </citation>
    <scope>NUCLEOTIDE SEQUENCE [LARGE SCALE MRNA] (ISOFORMS 1 AND 2)</scope>
    <source>
        <tissue>Placenta</tissue>
    </source>
</reference>
<reference key="2">
    <citation type="submission" date="2005-07" db="EMBL/GenBank/DDBJ databases">
        <authorList>
            <person name="Mural R.J."/>
            <person name="Istrail S."/>
            <person name="Sutton G.G."/>
            <person name="Florea L."/>
            <person name="Halpern A.L."/>
            <person name="Mobarry C.M."/>
            <person name="Lippert R."/>
            <person name="Walenz B."/>
            <person name="Shatkay H."/>
            <person name="Dew I."/>
            <person name="Miller J.R."/>
            <person name="Flanigan M.J."/>
            <person name="Edwards N.J."/>
            <person name="Bolanos R."/>
            <person name="Fasulo D."/>
            <person name="Halldorsson B.V."/>
            <person name="Hannenhalli S."/>
            <person name="Turner R."/>
            <person name="Yooseph S."/>
            <person name="Lu F."/>
            <person name="Nusskern D.R."/>
            <person name="Shue B.C."/>
            <person name="Zheng X.H."/>
            <person name="Zhong F."/>
            <person name="Delcher A.L."/>
            <person name="Huson D.H."/>
            <person name="Kravitz S.A."/>
            <person name="Mouchard L."/>
            <person name="Reinert K."/>
            <person name="Remington K.A."/>
            <person name="Clark A.G."/>
            <person name="Waterman M.S."/>
            <person name="Eichler E.E."/>
            <person name="Adams M.D."/>
            <person name="Hunkapiller M.W."/>
            <person name="Myers E.W."/>
            <person name="Venter J.C."/>
        </authorList>
    </citation>
    <scope>NUCLEOTIDE SEQUENCE [LARGE SCALE GENOMIC DNA]</scope>
</reference>
<reference key="3">
    <citation type="journal article" date="2006" name="Nature">
        <title>The DNA sequence, annotation and analysis of human chromosome 3.</title>
        <authorList>
            <person name="Muzny D.M."/>
            <person name="Scherer S.E."/>
            <person name="Kaul R."/>
            <person name="Wang J."/>
            <person name="Yu J."/>
            <person name="Sudbrak R."/>
            <person name="Buhay C.J."/>
            <person name="Chen R."/>
            <person name="Cree A."/>
            <person name="Ding Y."/>
            <person name="Dugan-Rocha S."/>
            <person name="Gill R."/>
            <person name="Gunaratne P."/>
            <person name="Harris R.A."/>
            <person name="Hawes A.C."/>
            <person name="Hernandez J."/>
            <person name="Hodgson A.V."/>
            <person name="Hume J."/>
            <person name="Jackson A."/>
            <person name="Khan Z.M."/>
            <person name="Kovar-Smith C."/>
            <person name="Lewis L.R."/>
            <person name="Lozado R.J."/>
            <person name="Metzker M.L."/>
            <person name="Milosavljevic A."/>
            <person name="Miner G.R."/>
            <person name="Morgan M.B."/>
            <person name="Nazareth L.V."/>
            <person name="Scott G."/>
            <person name="Sodergren E."/>
            <person name="Song X.-Z."/>
            <person name="Steffen D."/>
            <person name="Wei S."/>
            <person name="Wheeler D.A."/>
            <person name="Wright M.W."/>
            <person name="Worley K.C."/>
            <person name="Yuan Y."/>
            <person name="Zhang Z."/>
            <person name="Adams C.Q."/>
            <person name="Ansari-Lari M.A."/>
            <person name="Ayele M."/>
            <person name="Brown M.J."/>
            <person name="Chen G."/>
            <person name="Chen Z."/>
            <person name="Clendenning J."/>
            <person name="Clerc-Blankenburg K.P."/>
            <person name="Chen R."/>
            <person name="Chen Z."/>
            <person name="Davis C."/>
            <person name="Delgado O."/>
            <person name="Dinh H.H."/>
            <person name="Dong W."/>
            <person name="Draper H."/>
            <person name="Ernst S."/>
            <person name="Fu G."/>
            <person name="Gonzalez-Garay M.L."/>
            <person name="Garcia D.K."/>
            <person name="Gillett W."/>
            <person name="Gu J."/>
            <person name="Hao B."/>
            <person name="Haugen E."/>
            <person name="Havlak P."/>
            <person name="He X."/>
            <person name="Hennig S."/>
            <person name="Hu S."/>
            <person name="Huang W."/>
            <person name="Jackson L.R."/>
            <person name="Jacob L.S."/>
            <person name="Kelly S.H."/>
            <person name="Kube M."/>
            <person name="Levy R."/>
            <person name="Li Z."/>
            <person name="Liu B."/>
            <person name="Liu J."/>
            <person name="Liu W."/>
            <person name="Lu J."/>
            <person name="Maheshwari M."/>
            <person name="Nguyen B.-V."/>
            <person name="Okwuonu G.O."/>
            <person name="Palmeiri A."/>
            <person name="Pasternak S."/>
            <person name="Perez L.M."/>
            <person name="Phelps K.A."/>
            <person name="Plopper F.J."/>
            <person name="Qiang B."/>
            <person name="Raymond C."/>
            <person name="Rodriguez R."/>
            <person name="Saenphimmachak C."/>
            <person name="Santibanez J."/>
            <person name="Shen H."/>
            <person name="Shen Y."/>
            <person name="Subramanian S."/>
            <person name="Tabor P.E."/>
            <person name="Verduzco D."/>
            <person name="Waldron L."/>
            <person name="Wang J."/>
            <person name="Wang J."/>
            <person name="Wang Q."/>
            <person name="Williams G.A."/>
            <person name="Wong G.K.-S."/>
            <person name="Yao Z."/>
            <person name="Zhang J."/>
            <person name="Zhang X."/>
            <person name="Zhao G."/>
            <person name="Zhou J."/>
            <person name="Zhou Y."/>
            <person name="Nelson D."/>
            <person name="Lehrach H."/>
            <person name="Reinhardt R."/>
            <person name="Naylor S.L."/>
            <person name="Yang H."/>
            <person name="Olson M."/>
            <person name="Weinstock G."/>
            <person name="Gibbs R.A."/>
        </authorList>
    </citation>
    <scope>NUCLEOTIDE SEQUENCE [LARGE SCALE GENOMIC DNA]</scope>
</reference>
<reference key="4">
    <citation type="journal article" date="2004" name="Genome Res.">
        <title>The status, quality, and expansion of the NIH full-length cDNA project: the Mammalian Gene Collection (MGC).</title>
        <authorList>
            <consortium name="The MGC Project Team"/>
        </authorList>
    </citation>
    <scope>NUCLEOTIDE SEQUENCE [LARGE SCALE MRNA] (ISOFORM 2)</scope>
    <source>
        <tissue>Placenta</tissue>
    </source>
</reference>
<reference key="5">
    <citation type="journal article" date="2003" name="Nat. Biotechnol.">
        <title>Exploring proteomes and analyzing protein processing by mass spectrometric identification of sorted N-terminal peptides.</title>
        <authorList>
            <person name="Gevaert K."/>
            <person name="Goethals M."/>
            <person name="Martens L."/>
            <person name="Van Damme J."/>
            <person name="Staes A."/>
            <person name="Thomas G.R."/>
            <person name="Vandekerckhove J."/>
        </authorList>
    </citation>
    <scope>PROTEIN SEQUENCE OF 1-18</scope>
    <scope>ACETYLATION AT MET-1</scope>
</reference>
<reference key="6">
    <citation type="submission" date="2005-11" db="UniProtKB">
        <authorList>
            <person name="Bienvenut W.V."/>
            <person name="Claeys D."/>
        </authorList>
    </citation>
    <scope>PROTEIN SEQUENCE OF 1-18 AND 210-223</scope>
    <scope>ACETYLATION AT MET-1</scope>
    <scope>SUBCELLULAR LOCATION</scope>
    <scope>IDENTIFICATION BY MASS SPECTROMETRY</scope>
    <source>
        <tissue>Platelet</tissue>
    </source>
</reference>
<reference key="7">
    <citation type="journal article" date="2008" name="J. Proteome Res.">
        <title>Phosphorylation analysis of primary human T lymphocytes using sequential IMAC and titanium oxide enrichment.</title>
        <authorList>
            <person name="Carrascal M."/>
            <person name="Ovelleiro D."/>
            <person name="Casas V."/>
            <person name="Gay M."/>
            <person name="Abian J."/>
        </authorList>
    </citation>
    <scope>PHOSPHORYLATION [LARGE SCALE ANALYSIS] AT SER-137</scope>
    <scope>IDENTIFICATION BY MASS SPECTROMETRY [LARGE SCALE ANALYSIS]</scope>
    <source>
        <tissue>T-cell</tissue>
    </source>
</reference>
<protein>
    <recommendedName>
        <fullName>Transmembrane protein 40</fullName>
    </recommendedName>
</protein>
<keyword id="KW-0007">Acetylation</keyword>
<keyword id="KW-0025">Alternative splicing</keyword>
<keyword id="KW-0903">Direct protein sequencing</keyword>
<keyword id="KW-0472">Membrane</keyword>
<keyword id="KW-0597">Phosphoprotein</keyword>
<keyword id="KW-1267">Proteomics identification</keyword>
<keyword id="KW-1185">Reference proteome</keyword>
<keyword id="KW-0812">Transmembrane</keyword>
<keyword id="KW-1133">Transmembrane helix</keyword>
<dbReference type="EMBL" id="AK001898">
    <property type="protein sequence ID" value="BAA91967.1"/>
    <property type="molecule type" value="mRNA"/>
</dbReference>
<dbReference type="EMBL" id="AK092470">
    <property type="protein sequence ID" value="BAC03898.1"/>
    <property type="molecule type" value="mRNA"/>
</dbReference>
<dbReference type="EMBL" id="AC034198">
    <property type="status" value="NOT_ANNOTATED_CDS"/>
    <property type="molecule type" value="Genomic_DNA"/>
</dbReference>
<dbReference type="EMBL" id="CH471055">
    <property type="protein sequence ID" value="EAW64138.1"/>
    <property type="molecule type" value="Genomic_DNA"/>
</dbReference>
<dbReference type="EMBL" id="BC020658">
    <property type="protein sequence ID" value="AAH20658.1"/>
    <property type="molecule type" value="mRNA"/>
</dbReference>
<dbReference type="CCDS" id="CCDS2613.1">
    <molecule id="Q8WWA1-1"/>
</dbReference>
<dbReference type="CCDS" id="CCDS68347.1">
    <molecule id="Q8WWA1-3"/>
</dbReference>
<dbReference type="CCDS" id="CCDS68348.1">
    <molecule id="Q8WWA1-2"/>
</dbReference>
<dbReference type="RefSeq" id="NP_001271335.1">
    <property type="nucleotide sequence ID" value="NM_001284406.1"/>
</dbReference>
<dbReference type="RefSeq" id="NP_001271336.1">
    <molecule id="Q8WWA1-2"/>
    <property type="nucleotide sequence ID" value="NM_001284407.2"/>
</dbReference>
<dbReference type="RefSeq" id="NP_001271337.1">
    <molecule id="Q8WWA1-3"/>
    <property type="nucleotide sequence ID" value="NM_001284408.2"/>
</dbReference>
<dbReference type="RefSeq" id="NP_060776.2">
    <molecule id="Q8WWA1-1"/>
    <property type="nucleotide sequence ID" value="NM_018306.3"/>
</dbReference>
<dbReference type="RefSeq" id="XP_011532239.1">
    <molecule id="Q8WWA1-1"/>
    <property type="nucleotide sequence ID" value="XM_011533937.3"/>
</dbReference>
<dbReference type="RefSeq" id="XP_054203149.1">
    <molecule id="Q8WWA1-1"/>
    <property type="nucleotide sequence ID" value="XM_054347174.1"/>
</dbReference>
<dbReference type="SMR" id="Q8WWA1"/>
<dbReference type="BioGRID" id="120575">
    <property type="interactions" value="16"/>
</dbReference>
<dbReference type="FunCoup" id="Q8WWA1">
    <property type="interactions" value="80"/>
</dbReference>
<dbReference type="IntAct" id="Q8WWA1">
    <property type="interactions" value="10"/>
</dbReference>
<dbReference type="MINT" id="Q8WWA1"/>
<dbReference type="STRING" id="9606.ENSP00000322837"/>
<dbReference type="iPTMnet" id="Q8WWA1"/>
<dbReference type="MetOSite" id="Q8WWA1"/>
<dbReference type="PhosphoSitePlus" id="Q8WWA1"/>
<dbReference type="BioMuta" id="TMEM40"/>
<dbReference type="DMDM" id="134035046"/>
<dbReference type="jPOST" id="Q8WWA1"/>
<dbReference type="MassIVE" id="Q8WWA1"/>
<dbReference type="PaxDb" id="9606-ENSP00000322837"/>
<dbReference type="PeptideAtlas" id="Q8WWA1"/>
<dbReference type="ProteomicsDB" id="10321"/>
<dbReference type="ProteomicsDB" id="74870">
    <molecule id="Q8WWA1-1"/>
</dbReference>
<dbReference type="ProteomicsDB" id="74871">
    <molecule id="Q8WWA1-2"/>
</dbReference>
<dbReference type="TopDownProteomics" id="Q8WWA1-2">
    <molecule id="Q8WWA1-2"/>
</dbReference>
<dbReference type="Antibodypedia" id="26279">
    <property type="antibodies" value="37 antibodies from 9 providers"/>
</dbReference>
<dbReference type="DNASU" id="55287"/>
<dbReference type="Ensembl" id="ENST00000264728.8">
    <molecule id="Q8WWA1-1"/>
    <property type="protein sequence ID" value="ENSP00000264728.8"/>
    <property type="gene ID" value="ENSG00000088726.16"/>
</dbReference>
<dbReference type="Ensembl" id="ENST00000314124.12">
    <molecule id="Q8WWA1-1"/>
    <property type="protein sequence ID" value="ENSP00000322837.7"/>
    <property type="gene ID" value="ENSG00000088726.16"/>
</dbReference>
<dbReference type="Ensembl" id="ENST00000435218.6">
    <molecule id="Q8WWA1-2"/>
    <property type="protein sequence ID" value="ENSP00000405740.2"/>
    <property type="gene ID" value="ENSG00000088726.16"/>
</dbReference>
<dbReference type="Ensembl" id="ENST00000435575.5">
    <molecule id="Q8WWA1-3"/>
    <property type="protein sequence ID" value="ENSP00000396895.1"/>
    <property type="gene ID" value="ENSG00000088726.16"/>
</dbReference>
<dbReference type="GeneID" id="55287"/>
<dbReference type="KEGG" id="hsa:55287"/>
<dbReference type="MANE-Select" id="ENST00000314124.12">
    <property type="protein sequence ID" value="ENSP00000322837.7"/>
    <property type="RefSeq nucleotide sequence ID" value="NM_018306.4"/>
    <property type="RefSeq protein sequence ID" value="NP_060776.2"/>
</dbReference>
<dbReference type="UCSC" id="uc003bxg.3">
    <molecule id="Q8WWA1-1"/>
    <property type="organism name" value="human"/>
</dbReference>
<dbReference type="AGR" id="HGNC:25620"/>
<dbReference type="CTD" id="55287"/>
<dbReference type="DisGeNET" id="55287"/>
<dbReference type="GeneCards" id="TMEM40"/>
<dbReference type="HGNC" id="HGNC:25620">
    <property type="gene designation" value="TMEM40"/>
</dbReference>
<dbReference type="HPA" id="ENSG00000088726">
    <property type="expression patterns" value="Tissue enhanced (esophagus, skin, vagina)"/>
</dbReference>
<dbReference type="neXtProt" id="NX_Q8WWA1"/>
<dbReference type="OpenTargets" id="ENSG00000088726"/>
<dbReference type="PharmGKB" id="PA134940002"/>
<dbReference type="VEuPathDB" id="HostDB:ENSG00000088726"/>
<dbReference type="eggNOG" id="ENOG502SRH1">
    <property type="taxonomic scope" value="Eukaryota"/>
</dbReference>
<dbReference type="GeneTree" id="ENSGT00390000017530"/>
<dbReference type="HOGENOM" id="CLU_104233_0_0_1"/>
<dbReference type="InParanoid" id="Q8WWA1"/>
<dbReference type="OMA" id="NDEDQHP"/>
<dbReference type="OrthoDB" id="9382530at2759"/>
<dbReference type="PAN-GO" id="Q8WWA1">
    <property type="GO annotations" value="0 GO annotations based on evolutionary models"/>
</dbReference>
<dbReference type="PhylomeDB" id="Q8WWA1"/>
<dbReference type="TreeFam" id="TF336300"/>
<dbReference type="PathwayCommons" id="Q8WWA1"/>
<dbReference type="SignaLink" id="Q8WWA1"/>
<dbReference type="BioGRID-ORCS" id="55287">
    <property type="hits" value="9 hits in 1144 CRISPR screens"/>
</dbReference>
<dbReference type="ChiTaRS" id="TMEM40">
    <property type="organism name" value="human"/>
</dbReference>
<dbReference type="GenomeRNAi" id="55287"/>
<dbReference type="Pharos" id="Q8WWA1">
    <property type="development level" value="Tdark"/>
</dbReference>
<dbReference type="PRO" id="PR:Q8WWA1"/>
<dbReference type="Proteomes" id="UP000005640">
    <property type="component" value="Chromosome 3"/>
</dbReference>
<dbReference type="RNAct" id="Q8WWA1">
    <property type="molecule type" value="protein"/>
</dbReference>
<dbReference type="Bgee" id="ENSG00000088726">
    <property type="expression patterns" value="Expressed in lower esophagus mucosa and 136 other cell types or tissues"/>
</dbReference>
<dbReference type="ExpressionAtlas" id="Q8WWA1">
    <property type="expression patterns" value="baseline and differential"/>
</dbReference>
<dbReference type="GO" id="GO:0016020">
    <property type="term" value="C:membrane"/>
    <property type="evidence" value="ECO:0007669"/>
    <property type="project" value="UniProtKB-SubCell"/>
</dbReference>
<dbReference type="InterPro" id="IPR026181">
    <property type="entry name" value="TMEM40"/>
</dbReference>
<dbReference type="PANTHER" id="PTHR16108">
    <property type="match status" value="1"/>
</dbReference>
<dbReference type="PANTHER" id="PTHR16108:SF2">
    <property type="entry name" value="TRANSMEMBRANE PROTEIN 40"/>
    <property type="match status" value="1"/>
</dbReference>
<dbReference type="Pfam" id="PF15817">
    <property type="entry name" value="TMEM40"/>
    <property type="match status" value="1"/>
</dbReference>
<accession>Q8WWA1</accession>
<accession>C9JID5</accession>
<accession>Q8NAL4</accession>
<accession>Q9NUZ4</accession>
<proteinExistence type="evidence at protein level"/>
<feature type="chain" id="PRO_0000280358" description="Transmembrane protein 40">
    <location>
        <begin position="1"/>
        <end position="233"/>
    </location>
</feature>
<feature type="transmembrane region" description="Helical" evidence="1">
    <location>
        <begin position="160"/>
        <end position="180"/>
    </location>
</feature>
<feature type="transmembrane region" description="Helical" evidence="1">
    <location>
        <begin position="187"/>
        <end position="207"/>
    </location>
</feature>
<feature type="region of interest" description="Disordered" evidence="2">
    <location>
        <begin position="1"/>
        <end position="143"/>
    </location>
</feature>
<feature type="compositionally biased region" description="Polar residues" evidence="2">
    <location>
        <begin position="1"/>
        <end position="14"/>
    </location>
</feature>
<feature type="compositionally biased region" description="Low complexity" evidence="2">
    <location>
        <begin position="50"/>
        <end position="70"/>
    </location>
</feature>
<feature type="compositionally biased region" description="Gly residues" evidence="2">
    <location>
        <begin position="93"/>
        <end position="104"/>
    </location>
</feature>
<feature type="compositionally biased region" description="Basic and acidic residues" evidence="2">
    <location>
        <begin position="105"/>
        <end position="114"/>
    </location>
</feature>
<feature type="modified residue" description="N-acetylmethionine" evidence="3 4">
    <location>
        <position position="1"/>
    </location>
</feature>
<feature type="modified residue" description="Phosphoserine" evidence="8">
    <location>
        <position position="137"/>
    </location>
</feature>
<feature type="splice variant" id="VSP_055682" description="In isoform 3." evidence="7">
    <original>YGETDFHKQDGKAGLFSQEQYERNKSSSSSSSSSSSSSSSSSSSSSESNDEDQQPRATGKHRRSLGAGYPHGNGSPG</original>
    <variation>C</variation>
    <location>
        <begin position="25"/>
        <end position="101"/>
    </location>
</feature>
<feature type="splice variant" id="VSP_023643" description="In isoform 2." evidence="5 6">
    <location>
        <begin position="71"/>
        <end position="100"/>
    </location>
</feature>
<feature type="sequence conflict" description="In Ref. 1; BAA91967." evidence="7" ref="1">
    <original>S</original>
    <variation>F</variation>
    <location>
        <position position="55"/>
    </location>
</feature>
<sequence>METSASSSQPQDNSQVHRETEDVDYGETDFHKQDGKAGLFSQEQYERNKSSSSSSSSSSSSSSSSSSSSSESNDEDQQPRATGKHRRSLGAGYPHGNGSPGPGHGEPDVLKDELQLYGDAPGEVVPSGESGLRRRGSDPASGEVEASQLRRLNIKKDDEFFHFVLLCFAIGALLVCYHYYADWFMSLGVGLLTFASLETVGIYFGLVYRIHSVLQGFIPLFQKFRLTGFRKTD</sequence>
<name>TMM40_HUMAN</name>
<gene>
    <name type="primary">TMEM40</name>
</gene>
<organism>
    <name type="scientific">Homo sapiens</name>
    <name type="common">Human</name>
    <dbReference type="NCBI Taxonomy" id="9606"/>
    <lineage>
        <taxon>Eukaryota</taxon>
        <taxon>Metazoa</taxon>
        <taxon>Chordata</taxon>
        <taxon>Craniata</taxon>
        <taxon>Vertebrata</taxon>
        <taxon>Euteleostomi</taxon>
        <taxon>Mammalia</taxon>
        <taxon>Eutheria</taxon>
        <taxon>Euarchontoglires</taxon>
        <taxon>Primates</taxon>
        <taxon>Haplorrhini</taxon>
        <taxon>Catarrhini</taxon>
        <taxon>Hominidae</taxon>
        <taxon>Homo</taxon>
    </lineage>
</organism>